<dbReference type="EMBL" id="AF354917">
    <property type="protein sequence ID" value="AAQ15159.1"/>
    <property type="molecule type" value="mRNA"/>
</dbReference>
<dbReference type="SMR" id="Q71RQ8"/>
<dbReference type="GO" id="GO:0005576">
    <property type="term" value="C:extracellular region"/>
    <property type="evidence" value="ECO:0007669"/>
    <property type="project" value="UniProtKB-SubCell"/>
</dbReference>
<dbReference type="GO" id="GO:0090729">
    <property type="term" value="F:toxin activity"/>
    <property type="evidence" value="ECO:0007669"/>
    <property type="project" value="UniProtKB-KW"/>
</dbReference>
<dbReference type="CDD" id="cd00037">
    <property type="entry name" value="CLECT"/>
    <property type="match status" value="1"/>
</dbReference>
<dbReference type="FunFam" id="3.10.100.10:FF:000087">
    <property type="entry name" value="Snaclec rhodocetin subunit delta"/>
    <property type="match status" value="1"/>
</dbReference>
<dbReference type="Gene3D" id="3.10.100.10">
    <property type="entry name" value="Mannose-Binding Protein A, subunit A"/>
    <property type="match status" value="1"/>
</dbReference>
<dbReference type="InterPro" id="IPR001304">
    <property type="entry name" value="C-type_lectin-like"/>
</dbReference>
<dbReference type="InterPro" id="IPR016186">
    <property type="entry name" value="C-type_lectin-like/link_sf"/>
</dbReference>
<dbReference type="InterPro" id="IPR050111">
    <property type="entry name" value="C-type_lectin/snaclec_domain"/>
</dbReference>
<dbReference type="InterPro" id="IPR016187">
    <property type="entry name" value="CTDL_fold"/>
</dbReference>
<dbReference type="PANTHER" id="PTHR22803">
    <property type="entry name" value="MANNOSE, PHOSPHOLIPASE, LECTIN RECEPTOR RELATED"/>
    <property type="match status" value="1"/>
</dbReference>
<dbReference type="Pfam" id="PF00059">
    <property type="entry name" value="Lectin_C"/>
    <property type="match status" value="1"/>
</dbReference>
<dbReference type="SMART" id="SM00034">
    <property type="entry name" value="CLECT"/>
    <property type="match status" value="1"/>
</dbReference>
<dbReference type="SUPFAM" id="SSF56436">
    <property type="entry name" value="C-type lectin-like"/>
    <property type="match status" value="1"/>
</dbReference>
<dbReference type="PROSITE" id="PS50041">
    <property type="entry name" value="C_TYPE_LECTIN_2"/>
    <property type="match status" value="1"/>
</dbReference>
<keyword id="KW-1015">Disulfide bond</keyword>
<keyword id="KW-1199">Hemostasis impairing toxin</keyword>
<keyword id="KW-0964">Secreted</keyword>
<keyword id="KW-0732">Signal</keyword>
<keyword id="KW-0800">Toxin</keyword>
<organism>
    <name type="scientific">Trimeresurus stejnegeri</name>
    <name type="common">Chinese green tree viper</name>
    <name type="synonym">Viridovipera stejnegeri</name>
    <dbReference type="NCBI Taxonomy" id="39682"/>
    <lineage>
        <taxon>Eukaryota</taxon>
        <taxon>Metazoa</taxon>
        <taxon>Chordata</taxon>
        <taxon>Craniata</taxon>
        <taxon>Vertebrata</taxon>
        <taxon>Euteleostomi</taxon>
        <taxon>Lepidosauria</taxon>
        <taxon>Squamata</taxon>
        <taxon>Bifurcata</taxon>
        <taxon>Unidentata</taxon>
        <taxon>Episquamata</taxon>
        <taxon>Toxicofera</taxon>
        <taxon>Serpentes</taxon>
        <taxon>Colubroidea</taxon>
        <taxon>Viperidae</taxon>
        <taxon>Crotalinae</taxon>
        <taxon>Trimeresurus</taxon>
    </lineage>
</organism>
<protein>
    <recommendedName>
        <fullName>Snaclec stejaggregin-B subunit beta-2</fullName>
    </recommendedName>
</protein>
<proteinExistence type="evidence at transcript level"/>
<comment type="function">
    <text evidence="1">Interferes with one step of hemostasis (modulation of platelet aggregation, or coagulation cascade, for example).</text>
</comment>
<comment type="subunit">
    <text evidence="1">Heteromultimer; disulfide-linked.</text>
</comment>
<comment type="subcellular location">
    <subcellularLocation>
        <location evidence="1">Secreted</location>
    </subcellularLocation>
</comment>
<comment type="tissue specificity">
    <text>Expressed by the venom gland.</text>
</comment>
<comment type="similarity">
    <text evidence="4">Belongs to the snaclec family.</text>
</comment>
<feature type="signal peptide" evidence="2">
    <location>
        <begin position="1"/>
        <end position="23"/>
    </location>
</feature>
<feature type="chain" id="PRO_0000355310" description="Snaclec stejaggregin-B subunit beta-2">
    <location>
        <begin position="24"/>
        <end position="146"/>
    </location>
</feature>
<feature type="domain" description="C-type lectin" evidence="3">
    <location>
        <begin position="32"/>
        <end position="143"/>
    </location>
</feature>
<feature type="disulfide bond" evidence="3">
    <location>
        <begin position="53"/>
        <end position="142"/>
    </location>
</feature>
<feature type="disulfide bond" description="Interchain (with C-102 in alpha chain)" evidence="3">
    <location>
        <position position="98"/>
    </location>
</feature>
<feature type="disulfide bond" evidence="3">
    <location>
        <begin position="119"/>
        <end position="134"/>
    </location>
</feature>
<evidence type="ECO:0000250" key="1"/>
<evidence type="ECO:0000255" key="2"/>
<evidence type="ECO:0000255" key="3">
    <source>
        <dbReference type="PROSITE-ProRule" id="PRU00040"/>
    </source>
</evidence>
<evidence type="ECO:0000305" key="4"/>
<accession>Q71RQ8</accession>
<reference key="1">
    <citation type="submission" date="2001-03" db="EMBL/GenBank/DDBJ databases">
        <title>Cloning and characterization of C-type lectins from Trimeresurus stejnegeri venom.</title>
        <authorList>
            <person name="Lee W.-H."/>
            <person name="Liu H."/>
            <person name="Zhang Y."/>
        </authorList>
    </citation>
    <scope>NUCLEOTIDE SEQUENCE [MRNA]</scope>
    <source>
        <tissue>Venom gland</tissue>
    </source>
</reference>
<sequence length="146" mass="16820">MGRFIFVSFGLLVVFLSLSGSGADWPSDWSSYDLYCYRVFQEKKNWEDAEKFCTQQHTDSHLVSFDSSEEADFVASKTFPVLNYDLVWIGLGSVWNACKLQWSDGTELKYNAWSAESECITSKSIDNQWFTRSCSQTYPFVCKFQA</sequence>
<name>SLBB2_TRIST</name>